<comment type="function">
    <text evidence="1">May play a role in DNA repair. It seems to be involved in an RecBC-independent recombinational process of DNA repair. It may act with RecF and RecO.</text>
</comment>
<comment type="similarity">
    <text evidence="1">Belongs to the RecR family.</text>
</comment>
<feature type="chain" id="PRO_0000190309" description="Recombination protein RecR">
    <location>
        <begin position="1"/>
        <end position="198"/>
    </location>
</feature>
<feature type="domain" description="Toprim" evidence="1">
    <location>
        <begin position="81"/>
        <end position="175"/>
    </location>
</feature>
<feature type="zinc finger region" description="C4-type" evidence="1">
    <location>
        <begin position="58"/>
        <end position="73"/>
    </location>
</feature>
<organism>
    <name type="scientific">Clostridium perfringens (strain 13 / Type A)</name>
    <dbReference type="NCBI Taxonomy" id="195102"/>
    <lineage>
        <taxon>Bacteria</taxon>
        <taxon>Bacillati</taxon>
        <taxon>Bacillota</taxon>
        <taxon>Clostridia</taxon>
        <taxon>Eubacteriales</taxon>
        <taxon>Clostridiaceae</taxon>
        <taxon>Clostridium</taxon>
    </lineage>
</organism>
<reference key="1">
    <citation type="journal article" date="2002" name="Proc. Natl. Acad. Sci. U.S.A.">
        <title>Complete genome sequence of Clostridium perfringens, an anaerobic flesh-eater.</title>
        <authorList>
            <person name="Shimizu T."/>
            <person name="Ohtani K."/>
            <person name="Hirakawa H."/>
            <person name="Ohshima K."/>
            <person name="Yamashita A."/>
            <person name="Shiba T."/>
            <person name="Ogasawara N."/>
            <person name="Hattori M."/>
            <person name="Kuhara S."/>
            <person name="Hayashi H."/>
        </authorList>
    </citation>
    <scope>NUCLEOTIDE SEQUENCE [LARGE SCALE GENOMIC DNA]</scope>
    <source>
        <strain>13 / Type A</strain>
    </source>
</reference>
<gene>
    <name evidence="1" type="primary">recR</name>
    <name type="ordered locus">CPE0047</name>
</gene>
<accession>Q8XPB8</accession>
<evidence type="ECO:0000255" key="1">
    <source>
        <dbReference type="HAMAP-Rule" id="MF_00017"/>
    </source>
</evidence>
<keyword id="KW-0227">DNA damage</keyword>
<keyword id="KW-0233">DNA recombination</keyword>
<keyword id="KW-0234">DNA repair</keyword>
<keyword id="KW-0479">Metal-binding</keyword>
<keyword id="KW-1185">Reference proteome</keyword>
<keyword id="KW-0862">Zinc</keyword>
<keyword id="KW-0863">Zinc-finger</keyword>
<protein>
    <recommendedName>
        <fullName evidence="1">Recombination protein RecR</fullName>
    </recommendedName>
</protein>
<dbReference type="EMBL" id="BA000016">
    <property type="protein sequence ID" value="BAB79753.1"/>
    <property type="molecule type" value="Genomic_DNA"/>
</dbReference>
<dbReference type="RefSeq" id="WP_003450875.1">
    <property type="nucleotide sequence ID" value="NC_003366.1"/>
</dbReference>
<dbReference type="SMR" id="Q8XPB8"/>
<dbReference type="STRING" id="195102.gene:10489278"/>
<dbReference type="GeneID" id="93000667"/>
<dbReference type="KEGG" id="cpe:CPE0047"/>
<dbReference type="HOGENOM" id="CLU_060739_1_0_9"/>
<dbReference type="Proteomes" id="UP000000818">
    <property type="component" value="Chromosome"/>
</dbReference>
<dbReference type="GO" id="GO:0003677">
    <property type="term" value="F:DNA binding"/>
    <property type="evidence" value="ECO:0007669"/>
    <property type="project" value="UniProtKB-UniRule"/>
</dbReference>
<dbReference type="GO" id="GO:0008270">
    <property type="term" value="F:zinc ion binding"/>
    <property type="evidence" value="ECO:0007669"/>
    <property type="project" value="UniProtKB-KW"/>
</dbReference>
<dbReference type="GO" id="GO:0006310">
    <property type="term" value="P:DNA recombination"/>
    <property type="evidence" value="ECO:0007669"/>
    <property type="project" value="UniProtKB-UniRule"/>
</dbReference>
<dbReference type="GO" id="GO:0006281">
    <property type="term" value="P:DNA repair"/>
    <property type="evidence" value="ECO:0007669"/>
    <property type="project" value="UniProtKB-UniRule"/>
</dbReference>
<dbReference type="CDD" id="cd01025">
    <property type="entry name" value="TOPRIM_recR"/>
    <property type="match status" value="1"/>
</dbReference>
<dbReference type="Gene3D" id="3.30.60.80">
    <property type="match status" value="1"/>
</dbReference>
<dbReference type="Gene3D" id="3.40.1360.10">
    <property type="match status" value="1"/>
</dbReference>
<dbReference type="Gene3D" id="6.10.250.240">
    <property type="match status" value="1"/>
</dbReference>
<dbReference type="Gene3D" id="1.10.8.420">
    <property type="entry name" value="RecR Domain 1"/>
    <property type="match status" value="1"/>
</dbReference>
<dbReference type="HAMAP" id="MF_00017">
    <property type="entry name" value="RecR"/>
    <property type="match status" value="1"/>
</dbReference>
<dbReference type="InterPro" id="IPR000093">
    <property type="entry name" value="DNA_Rcmb_RecR"/>
</dbReference>
<dbReference type="InterPro" id="IPR023627">
    <property type="entry name" value="Rcmb_RecR"/>
</dbReference>
<dbReference type="InterPro" id="IPR015967">
    <property type="entry name" value="Rcmb_RecR_Znf"/>
</dbReference>
<dbReference type="InterPro" id="IPR006171">
    <property type="entry name" value="TOPRIM_dom"/>
</dbReference>
<dbReference type="InterPro" id="IPR034137">
    <property type="entry name" value="TOPRIM_RecR"/>
</dbReference>
<dbReference type="NCBIfam" id="TIGR00615">
    <property type="entry name" value="recR"/>
    <property type="match status" value="1"/>
</dbReference>
<dbReference type="PANTHER" id="PTHR30446">
    <property type="entry name" value="RECOMBINATION PROTEIN RECR"/>
    <property type="match status" value="1"/>
</dbReference>
<dbReference type="PANTHER" id="PTHR30446:SF0">
    <property type="entry name" value="RECOMBINATION PROTEIN RECR"/>
    <property type="match status" value="1"/>
</dbReference>
<dbReference type="Pfam" id="PF21175">
    <property type="entry name" value="RecR_C"/>
    <property type="match status" value="1"/>
</dbReference>
<dbReference type="Pfam" id="PF21176">
    <property type="entry name" value="RecR_HhH"/>
    <property type="match status" value="1"/>
</dbReference>
<dbReference type="Pfam" id="PF02132">
    <property type="entry name" value="RecR_ZnF"/>
    <property type="match status" value="1"/>
</dbReference>
<dbReference type="Pfam" id="PF13662">
    <property type="entry name" value="Toprim_4"/>
    <property type="match status" value="1"/>
</dbReference>
<dbReference type="SMART" id="SM00493">
    <property type="entry name" value="TOPRIM"/>
    <property type="match status" value="1"/>
</dbReference>
<dbReference type="SUPFAM" id="SSF111304">
    <property type="entry name" value="Recombination protein RecR"/>
    <property type="match status" value="1"/>
</dbReference>
<dbReference type="PROSITE" id="PS50880">
    <property type="entry name" value="TOPRIM"/>
    <property type="match status" value="1"/>
</dbReference>
<proteinExistence type="inferred from homology"/>
<sequence length="198" mass="21845">MEFYPVAIEKLIEEFAKLPSIGKKSAQRLTLHILNLPKDEVEEFANALVKARGTIKYCSVCGNFTDTDPCAICSNPNREKDIICVVEQPKDIMTMEKVKEFNGLYHVLHGTISPMQGRGPQDIRIRELVARMSGDVKEVIVATNPTIEGEATAMYISKILKPLDVKVTRIAAGIPVGGDLEYADEVTLSKALEGRTVI</sequence>
<name>RECR_CLOPE</name>